<sequence>MENFDKTMKFDYEELPTQDVRDVLNNVYRTLDERGYNAVNQIVGYLLSGDPAYIPRQNEARNQIRHIDRDVIMEELVSYYLKEQNK</sequence>
<gene>
    <name type="ordered locus">SA1445</name>
</gene>
<feature type="chain" id="PRO_0000216982" description="UPF0297 protein SA1445">
    <location>
        <begin position="1"/>
        <end position="86"/>
    </location>
</feature>
<proteinExistence type="evidence at protein level"/>
<accession>P60359</accession>
<accession>Q99TN2</accession>
<protein>
    <recommendedName>
        <fullName evidence="1">UPF0297 protein SA1445</fullName>
    </recommendedName>
</protein>
<dbReference type="EMBL" id="BA000018">
    <property type="protein sequence ID" value="BAB42709.1"/>
    <property type="molecule type" value="Genomic_DNA"/>
</dbReference>
<dbReference type="PIR" id="H89943">
    <property type="entry name" value="H89943"/>
</dbReference>
<dbReference type="RefSeq" id="WP_000426912.1">
    <property type="nucleotide sequence ID" value="NC_002745.2"/>
</dbReference>
<dbReference type="SMR" id="P60359"/>
<dbReference type="EnsemblBacteria" id="BAB42709">
    <property type="protein sequence ID" value="BAB42709"/>
    <property type="gene ID" value="BAB42709"/>
</dbReference>
<dbReference type="KEGG" id="sau:SA1445"/>
<dbReference type="HOGENOM" id="CLU_162466_0_0_9"/>
<dbReference type="HAMAP" id="MF_01507">
    <property type="entry name" value="UPF0297"/>
    <property type="match status" value="1"/>
</dbReference>
<dbReference type="InterPro" id="IPR009309">
    <property type="entry name" value="IreB"/>
</dbReference>
<dbReference type="NCBIfam" id="NF003997">
    <property type="entry name" value="PRK05473.1"/>
    <property type="match status" value="1"/>
</dbReference>
<dbReference type="PANTHER" id="PTHR40067">
    <property type="entry name" value="UPF0297 PROTEIN YRZL"/>
    <property type="match status" value="1"/>
</dbReference>
<dbReference type="PANTHER" id="PTHR40067:SF1">
    <property type="entry name" value="UPF0297 PROTEIN YRZL"/>
    <property type="match status" value="1"/>
</dbReference>
<dbReference type="Pfam" id="PF06135">
    <property type="entry name" value="IreB"/>
    <property type="match status" value="1"/>
</dbReference>
<dbReference type="PIRSF" id="PIRSF037258">
    <property type="entry name" value="DUF965_bac"/>
    <property type="match status" value="1"/>
</dbReference>
<comment type="similarity">
    <text evidence="1">Belongs to the UPF0297 family.</text>
</comment>
<reference key="1">
    <citation type="journal article" date="2001" name="Lancet">
        <title>Whole genome sequencing of meticillin-resistant Staphylococcus aureus.</title>
        <authorList>
            <person name="Kuroda M."/>
            <person name="Ohta T."/>
            <person name="Uchiyama I."/>
            <person name="Baba T."/>
            <person name="Yuzawa H."/>
            <person name="Kobayashi I."/>
            <person name="Cui L."/>
            <person name="Oguchi A."/>
            <person name="Aoki K."/>
            <person name="Nagai Y."/>
            <person name="Lian J.-Q."/>
            <person name="Ito T."/>
            <person name="Kanamori M."/>
            <person name="Matsumaru H."/>
            <person name="Maruyama A."/>
            <person name="Murakami H."/>
            <person name="Hosoyama A."/>
            <person name="Mizutani-Ui Y."/>
            <person name="Takahashi N.K."/>
            <person name="Sawano T."/>
            <person name="Inoue R."/>
            <person name="Kaito C."/>
            <person name="Sekimizu K."/>
            <person name="Hirakawa H."/>
            <person name="Kuhara S."/>
            <person name="Goto S."/>
            <person name="Yabuzaki J."/>
            <person name="Kanehisa M."/>
            <person name="Yamashita A."/>
            <person name="Oshima K."/>
            <person name="Furuya K."/>
            <person name="Yoshino C."/>
            <person name="Shiba T."/>
            <person name="Hattori M."/>
            <person name="Ogasawara N."/>
            <person name="Hayashi H."/>
            <person name="Hiramatsu K."/>
        </authorList>
    </citation>
    <scope>NUCLEOTIDE SEQUENCE [LARGE SCALE GENOMIC DNA]</scope>
    <source>
        <strain>N315</strain>
    </source>
</reference>
<reference key="2">
    <citation type="submission" date="2007-10" db="UniProtKB">
        <title>Shotgun proteomic analysis of total and membrane protein extracts of S. aureus strain N315.</title>
        <authorList>
            <person name="Vaezzadeh A.R."/>
            <person name="Deshusses J."/>
            <person name="Lescuyer P."/>
            <person name="Hochstrasser D.F."/>
        </authorList>
    </citation>
    <scope>IDENTIFICATION BY MASS SPECTROMETRY [LARGE SCALE ANALYSIS]</scope>
    <source>
        <strain>N315</strain>
    </source>
</reference>
<organism>
    <name type="scientific">Staphylococcus aureus (strain N315)</name>
    <dbReference type="NCBI Taxonomy" id="158879"/>
    <lineage>
        <taxon>Bacteria</taxon>
        <taxon>Bacillati</taxon>
        <taxon>Bacillota</taxon>
        <taxon>Bacilli</taxon>
        <taxon>Bacillales</taxon>
        <taxon>Staphylococcaceae</taxon>
        <taxon>Staphylococcus</taxon>
    </lineage>
</organism>
<evidence type="ECO:0000255" key="1">
    <source>
        <dbReference type="HAMAP-Rule" id="MF_01507"/>
    </source>
</evidence>
<name>Y1445_STAAN</name>